<keyword id="KW-0030">Aminoacyl-tRNA synthetase</keyword>
<keyword id="KW-0067">ATP-binding</keyword>
<keyword id="KW-0963">Cytoplasm</keyword>
<keyword id="KW-0436">Ligase</keyword>
<keyword id="KW-0479">Metal-binding</keyword>
<keyword id="KW-0547">Nucleotide-binding</keyword>
<keyword id="KW-0648">Protein biosynthesis</keyword>
<keyword id="KW-0862">Zinc</keyword>
<gene>
    <name evidence="1" type="primary">cysS</name>
    <name type="ordered locus">lwe0202</name>
</gene>
<organism>
    <name type="scientific">Listeria welshimeri serovar 6b (strain ATCC 35897 / DSM 20650 / CCUG 15529 / CIP 8149 / NCTC 11857 / SLCC 5334 / V8)</name>
    <dbReference type="NCBI Taxonomy" id="386043"/>
    <lineage>
        <taxon>Bacteria</taxon>
        <taxon>Bacillati</taxon>
        <taxon>Bacillota</taxon>
        <taxon>Bacilli</taxon>
        <taxon>Bacillales</taxon>
        <taxon>Listeriaceae</taxon>
        <taxon>Listeria</taxon>
    </lineage>
</organism>
<comment type="catalytic activity">
    <reaction evidence="1">
        <text>tRNA(Cys) + L-cysteine + ATP = L-cysteinyl-tRNA(Cys) + AMP + diphosphate</text>
        <dbReference type="Rhea" id="RHEA:17773"/>
        <dbReference type="Rhea" id="RHEA-COMP:9661"/>
        <dbReference type="Rhea" id="RHEA-COMP:9679"/>
        <dbReference type="ChEBI" id="CHEBI:30616"/>
        <dbReference type="ChEBI" id="CHEBI:33019"/>
        <dbReference type="ChEBI" id="CHEBI:35235"/>
        <dbReference type="ChEBI" id="CHEBI:78442"/>
        <dbReference type="ChEBI" id="CHEBI:78517"/>
        <dbReference type="ChEBI" id="CHEBI:456215"/>
        <dbReference type="EC" id="6.1.1.16"/>
    </reaction>
</comment>
<comment type="cofactor">
    <cofactor evidence="1">
        <name>Zn(2+)</name>
        <dbReference type="ChEBI" id="CHEBI:29105"/>
    </cofactor>
    <text evidence="1">Binds 1 zinc ion per subunit.</text>
</comment>
<comment type="subunit">
    <text evidence="1">Monomer.</text>
</comment>
<comment type="subcellular location">
    <subcellularLocation>
        <location evidence="1">Cytoplasm</location>
    </subcellularLocation>
</comment>
<comment type="similarity">
    <text evidence="1">Belongs to the class-I aminoacyl-tRNA synthetase family.</text>
</comment>
<protein>
    <recommendedName>
        <fullName evidence="1">Cysteine--tRNA ligase</fullName>
        <ecNumber evidence="1">6.1.1.16</ecNumber>
    </recommendedName>
    <alternativeName>
        <fullName evidence="1">Cysteinyl-tRNA synthetase</fullName>
        <shortName evidence="1">CysRS</shortName>
    </alternativeName>
</protein>
<proteinExistence type="inferred from homology"/>
<feature type="chain" id="PRO_0000332846" description="Cysteine--tRNA ligase">
    <location>
        <begin position="1"/>
        <end position="471"/>
    </location>
</feature>
<feature type="short sequence motif" description="'HIGH' region">
    <location>
        <begin position="31"/>
        <end position="41"/>
    </location>
</feature>
<feature type="short sequence motif" description="'KMSKS' region">
    <location>
        <begin position="266"/>
        <end position="270"/>
    </location>
</feature>
<feature type="binding site" evidence="1">
    <location>
        <position position="29"/>
    </location>
    <ligand>
        <name>Zn(2+)</name>
        <dbReference type="ChEBI" id="CHEBI:29105"/>
    </ligand>
</feature>
<feature type="binding site" evidence="1">
    <location>
        <position position="209"/>
    </location>
    <ligand>
        <name>Zn(2+)</name>
        <dbReference type="ChEBI" id="CHEBI:29105"/>
    </ligand>
</feature>
<feature type="binding site" evidence="1">
    <location>
        <position position="234"/>
    </location>
    <ligand>
        <name>Zn(2+)</name>
        <dbReference type="ChEBI" id="CHEBI:29105"/>
    </ligand>
</feature>
<feature type="binding site" evidence="1">
    <location>
        <position position="238"/>
    </location>
    <ligand>
        <name>Zn(2+)</name>
        <dbReference type="ChEBI" id="CHEBI:29105"/>
    </ligand>
</feature>
<feature type="binding site" evidence="1">
    <location>
        <position position="269"/>
    </location>
    <ligand>
        <name>ATP</name>
        <dbReference type="ChEBI" id="CHEBI:30616"/>
    </ligand>
</feature>
<name>SYC_LISW6</name>
<accession>A0AF38</accession>
<sequence>MSIQIFNTLTREKEPFKPLKDGEVKMYVCGPTVYNYIHIGNARPIIVFDTVRRYFTYRGYDVKFVSNFTDVDDKLIRAANELKLTVPEVADRFIGAYFDDVDQLNVAKASVNPRVTENMDEIIQLISTLIEKGYAYESAGDVYFRTKKFKDYGKLSGQELSELQHGARVEYNERKQDELDFTLWKAAKPDEIFWESPFGNGRPGWHIECSALAKKYLGDTIDIHAGGQDLVFPHHEDEIAQSEAATGKTFANYWMHNAFLNIDGEKMSKSLGNFITLHDVLKDNDPNVIRFFMLSVHYRKPITLNDAILEDAKNGLERLMIAYQNIDHRIQTDDGEYVEEAHEDEWLEQLTELKQAFEDDMDDDFNTANAITTFHELAKRANIYLAKETVSINVLREFLSMMRLFAEVLGLKLENTQTDSLDDSEVEALIEERLQARNERNFARADEIRDILKEKNIILEDTAQGTRFRRG</sequence>
<reference key="1">
    <citation type="journal article" date="2006" name="J. Bacteriol.">
        <title>Whole-genome sequence of Listeria welshimeri reveals common steps in genome reduction with Listeria innocua as compared to Listeria monocytogenes.</title>
        <authorList>
            <person name="Hain T."/>
            <person name="Steinweg C."/>
            <person name="Kuenne C.T."/>
            <person name="Billion A."/>
            <person name="Ghai R."/>
            <person name="Chatterjee S.S."/>
            <person name="Domann E."/>
            <person name="Kaerst U."/>
            <person name="Goesmann A."/>
            <person name="Bekel T."/>
            <person name="Bartels D."/>
            <person name="Kaiser O."/>
            <person name="Meyer F."/>
            <person name="Puehler A."/>
            <person name="Weisshaar B."/>
            <person name="Wehland J."/>
            <person name="Liang C."/>
            <person name="Dandekar T."/>
            <person name="Lampidis R."/>
            <person name="Kreft J."/>
            <person name="Goebel W."/>
            <person name="Chakraborty T."/>
        </authorList>
    </citation>
    <scope>NUCLEOTIDE SEQUENCE [LARGE SCALE GENOMIC DNA]</scope>
    <source>
        <strain>ATCC 35897 / DSM 20650 / CCUG 15529 / CIP 8149 / NCTC 11857 / SLCC 5334 / V8</strain>
    </source>
</reference>
<dbReference type="EC" id="6.1.1.16" evidence="1"/>
<dbReference type="EMBL" id="AM263198">
    <property type="protein sequence ID" value="CAK19620.1"/>
    <property type="molecule type" value="Genomic_DNA"/>
</dbReference>
<dbReference type="RefSeq" id="WP_011701065.1">
    <property type="nucleotide sequence ID" value="NC_008555.1"/>
</dbReference>
<dbReference type="SMR" id="A0AF38"/>
<dbReference type="STRING" id="386043.lwe0202"/>
<dbReference type="GeneID" id="61188095"/>
<dbReference type="KEGG" id="lwe:lwe0202"/>
<dbReference type="eggNOG" id="COG0215">
    <property type="taxonomic scope" value="Bacteria"/>
</dbReference>
<dbReference type="HOGENOM" id="CLU_013528_0_1_9"/>
<dbReference type="OrthoDB" id="9815130at2"/>
<dbReference type="Proteomes" id="UP000000779">
    <property type="component" value="Chromosome"/>
</dbReference>
<dbReference type="GO" id="GO:0005829">
    <property type="term" value="C:cytosol"/>
    <property type="evidence" value="ECO:0007669"/>
    <property type="project" value="TreeGrafter"/>
</dbReference>
<dbReference type="GO" id="GO:0005524">
    <property type="term" value="F:ATP binding"/>
    <property type="evidence" value="ECO:0007669"/>
    <property type="project" value="UniProtKB-UniRule"/>
</dbReference>
<dbReference type="GO" id="GO:0004817">
    <property type="term" value="F:cysteine-tRNA ligase activity"/>
    <property type="evidence" value="ECO:0007669"/>
    <property type="project" value="UniProtKB-UniRule"/>
</dbReference>
<dbReference type="GO" id="GO:0008270">
    <property type="term" value="F:zinc ion binding"/>
    <property type="evidence" value="ECO:0007669"/>
    <property type="project" value="UniProtKB-UniRule"/>
</dbReference>
<dbReference type="GO" id="GO:0006423">
    <property type="term" value="P:cysteinyl-tRNA aminoacylation"/>
    <property type="evidence" value="ECO:0007669"/>
    <property type="project" value="UniProtKB-UniRule"/>
</dbReference>
<dbReference type="CDD" id="cd00672">
    <property type="entry name" value="CysRS_core"/>
    <property type="match status" value="1"/>
</dbReference>
<dbReference type="FunFam" id="1.20.120.1910:FF:000002">
    <property type="entry name" value="Cysteine--tRNA ligase"/>
    <property type="match status" value="1"/>
</dbReference>
<dbReference type="FunFam" id="3.40.50.620:FF:000009">
    <property type="entry name" value="Cysteine--tRNA ligase"/>
    <property type="match status" value="1"/>
</dbReference>
<dbReference type="Gene3D" id="1.20.120.1910">
    <property type="entry name" value="Cysteine-tRNA ligase, C-terminal anti-codon recognition domain"/>
    <property type="match status" value="1"/>
</dbReference>
<dbReference type="Gene3D" id="3.40.50.620">
    <property type="entry name" value="HUPs"/>
    <property type="match status" value="1"/>
</dbReference>
<dbReference type="HAMAP" id="MF_00041">
    <property type="entry name" value="Cys_tRNA_synth"/>
    <property type="match status" value="1"/>
</dbReference>
<dbReference type="InterPro" id="IPR015803">
    <property type="entry name" value="Cys-tRNA-ligase"/>
</dbReference>
<dbReference type="InterPro" id="IPR015273">
    <property type="entry name" value="Cys-tRNA-synt_Ia_DALR"/>
</dbReference>
<dbReference type="InterPro" id="IPR024909">
    <property type="entry name" value="Cys-tRNA/MSH_ligase"/>
</dbReference>
<dbReference type="InterPro" id="IPR014729">
    <property type="entry name" value="Rossmann-like_a/b/a_fold"/>
</dbReference>
<dbReference type="InterPro" id="IPR032678">
    <property type="entry name" value="tRNA-synt_1_cat_dom"/>
</dbReference>
<dbReference type="InterPro" id="IPR009080">
    <property type="entry name" value="tRNAsynth_Ia_anticodon-bd"/>
</dbReference>
<dbReference type="NCBIfam" id="TIGR00435">
    <property type="entry name" value="cysS"/>
    <property type="match status" value="1"/>
</dbReference>
<dbReference type="PANTHER" id="PTHR10890:SF3">
    <property type="entry name" value="CYSTEINE--TRNA LIGASE, CYTOPLASMIC"/>
    <property type="match status" value="1"/>
</dbReference>
<dbReference type="PANTHER" id="PTHR10890">
    <property type="entry name" value="CYSTEINYL-TRNA SYNTHETASE"/>
    <property type="match status" value="1"/>
</dbReference>
<dbReference type="Pfam" id="PF09190">
    <property type="entry name" value="DALR_2"/>
    <property type="match status" value="1"/>
</dbReference>
<dbReference type="Pfam" id="PF01406">
    <property type="entry name" value="tRNA-synt_1e"/>
    <property type="match status" value="1"/>
</dbReference>
<dbReference type="PRINTS" id="PR00983">
    <property type="entry name" value="TRNASYNTHCYS"/>
</dbReference>
<dbReference type="SMART" id="SM00840">
    <property type="entry name" value="DALR_2"/>
    <property type="match status" value="1"/>
</dbReference>
<dbReference type="SUPFAM" id="SSF47323">
    <property type="entry name" value="Anticodon-binding domain of a subclass of class I aminoacyl-tRNA synthetases"/>
    <property type="match status" value="1"/>
</dbReference>
<dbReference type="SUPFAM" id="SSF52374">
    <property type="entry name" value="Nucleotidylyl transferase"/>
    <property type="match status" value="1"/>
</dbReference>
<evidence type="ECO:0000255" key="1">
    <source>
        <dbReference type="HAMAP-Rule" id="MF_00041"/>
    </source>
</evidence>